<keyword id="KW-0030">Aminoacyl-tRNA synthetase</keyword>
<keyword id="KW-0067">ATP-binding</keyword>
<keyword id="KW-0963">Cytoplasm</keyword>
<keyword id="KW-0436">Ligase</keyword>
<keyword id="KW-0547">Nucleotide-binding</keyword>
<keyword id="KW-0648">Protein biosynthesis</keyword>
<reference key="1">
    <citation type="journal article" date="2002" name="Proc. Natl. Acad. Sci. U.S.A.">
        <title>The Brucella suis genome reveals fundamental similarities between animal and plant pathogens and symbionts.</title>
        <authorList>
            <person name="Paulsen I.T."/>
            <person name="Seshadri R."/>
            <person name="Nelson K.E."/>
            <person name="Eisen J.A."/>
            <person name="Heidelberg J.F."/>
            <person name="Read T.D."/>
            <person name="Dodson R.J."/>
            <person name="Umayam L.A."/>
            <person name="Brinkac L.M."/>
            <person name="Beanan M.J."/>
            <person name="Daugherty S.C."/>
            <person name="DeBoy R.T."/>
            <person name="Durkin A.S."/>
            <person name="Kolonay J.F."/>
            <person name="Madupu R."/>
            <person name="Nelson W.C."/>
            <person name="Ayodeji B."/>
            <person name="Kraul M."/>
            <person name="Shetty J."/>
            <person name="Malek J.A."/>
            <person name="Van Aken S.E."/>
            <person name="Riedmuller S."/>
            <person name="Tettelin H."/>
            <person name="Gill S.R."/>
            <person name="White O."/>
            <person name="Salzberg S.L."/>
            <person name="Hoover D.L."/>
            <person name="Lindler L.E."/>
            <person name="Halling S.M."/>
            <person name="Boyle S.M."/>
            <person name="Fraser C.M."/>
        </authorList>
    </citation>
    <scope>NUCLEOTIDE SEQUENCE [LARGE SCALE GENOMIC DNA]</scope>
    <source>
        <strain>1330</strain>
    </source>
</reference>
<reference key="2">
    <citation type="journal article" date="2011" name="J. Bacteriol.">
        <title>Revised genome sequence of Brucella suis 1330.</title>
        <authorList>
            <person name="Tae H."/>
            <person name="Shallom S."/>
            <person name="Settlage R."/>
            <person name="Preston D."/>
            <person name="Adams L.G."/>
            <person name="Garner H.R."/>
        </authorList>
    </citation>
    <scope>NUCLEOTIDE SEQUENCE [LARGE SCALE GENOMIC DNA]</scope>
    <source>
        <strain>1330</strain>
    </source>
</reference>
<sequence>MLDIKWIRENPETLDKALAKRGAAPLSSELIALDEKRREHVGKVQAAQERRNAASKEIGKAMAAKDMGTAEKLKAEVGELKDFLAHAEEDERRLSKELSDALSTIPNIPLDDVPLGKDESDNVELRRIGNPHNFSFQPKEHFELGEALGYMDFERAAKLAGARFTVLKGPLARLERALGQFMLDLHTTEHGYTEVMPPLMVRDEAVYGTGQLPKFSEDLFRTTDGRWLIPTAEVPLTNLVAEEIVDMKGLPLRFTALTPCFRSEAGSAGRDTRGMLRQHQFLKVEMVSITDAESSVAEHERMTACAEEVLKRLGLPFRTVVLCTGDMGFGAQRTYDIEVWLPGQNTYREISSCSTCGDFQGRRMNARYRPEGEKSTRFVHTLNGSGVAVGRALIAVMENYQQEDGSIHIPEALQPYIGGLTRIEKAA</sequence>
<comment type="function">
    <text evidence="1">Catalyzes the attachment of serine to tRNA(Ser). Is also able to aminoacylate tRNA(Sec) with serine, to form the misacylated tRNA L-seryl-tRNA(Sec), which will be further converted into selenocysteinyl-tRNA(Sec).</text>
</comment>
<comment type="catalytic activity">
    <reaction evidence="1">
        <text>tRNA(Ser) + L-serine + ATP = L-seryl-tRNA(Ser) + AMP + diphosphate + H(+)</text>
        <dbReference type="Rhea" id="RHEA:12292"/>
        <dbReference type="Rhea" id="RHEA-COMP:9669"/>
        <dbReference type="Rhea" id="RHEA-COMP:9703"/>
        <dbReference type="ChEBI" id="CHEBI:15378"/>
        <dbReference type="ChEBI" id="CHEBI:30616"/>
        <dbReference type="ChEBI" id="CHEBI:33019"/>
        <dbReference type="ChEBI" id="CHEBI:33384"/>
        <dbReference type="ChEBI" id="CHEBI:78442"/>
        <dbReference type="ChEBI" id="CHEBI:78533"/>
        <dbReference type="ChEBI" id="CHEBI:456215"/>
        <dbReference type="EC" id="6.1.1.11"/>
    </reaction>
</comment>
<comment type="catalytic activity">
    <reaction evidence="1">
        <text>tRNA(Sec) + L-serine + ATP = L-seryl-tRNA(Sec) + AMP + diphosphate + H(+)</text>
        <dbReference type="Rhea" id="RHEA:42580"/>
        <dbReference type="Rhea" id="RHEA-COMP:9742"/>
        <dbReference type="Rhea" id="RHEA-COMP:10128"/>
        <dbReference type="ChEBI" id="CHEBI:15378"/>
        <dbReference type="ChEBI" id="CHEBI:30616"/>
        <dbReference type="ChEBI" id="CHEBI:33019"/>
        <dbReference type="ChEBI" id="CHEBI:33384"/>
        <dbReference type="ChEBI" id="CHEBI:78442"/>
        <dbReference type="ChEBI" id="CHEBI:78533"/>
        <dbReference type="ChEBI" id="CHEBI:456215"/>
        <dbReference type="EC" id="6.1.1.11"/>
    </reaction>
</comment>
<comment type="pathway">
    <text evidence="1">Aminoacyl-tRNA biosynthesis; selenocysteinyl-tRNA(Sec) biosynthesis; L-seryl-tRNA(Sec) from L-serine and tRNA(Sec): step 1/1.</text>
</comment>
<comment type="subunit">
    <text evidence="1">Homodimer. The tRNA molecule binds across the dimer.</text>
</comment>
<comment type="subcellular location">
    <subcellularLocation>
        <location evidence="1">Cytoplasm</location>
    </subcellularLocation>
</comment>
<comment type="domain">
    <text evidence="1">Consists of two distinct domains, a catalytic core and a N-terminal extension that is involved in tRNA binding.</text>
</comment>
<comment type="similarity">
    <text evidence="1">Belongs to the class-II aminoacyl-tRNA synthetase family. Type-1 seryl-tRNA synthetase subfamily.</text>
</comment>
<gene>
    <name evidence="1" type="primary">serS</name>
    <name type="ordered locus">BR0885</name>
    <name type="ordered locus">BS1330_I0881</name>
</gene>
<dbReference type="EC" id="6.1.1.11" evidence="1"/>
<dbReference type="EMBL" id="AE014291">
    <property type="protein sequence ID" value="AAN29813.1"/>
    <property type="molecule type" value="Genomic_DNA"/>
</dbReference>
<dbReference type="EMBL" id="CP002997">
    <property type="protein sequence ID" value="AEM18230.1"/>
    <property type="molecule type" value="Genomic_DNA"/>
</dbReference>
<dbReference type="RefSeq" id="WP_004690784.1">
    <property type="nucleotide sequence ID" value="NZ_KN046804.1"/>
</dbReference>
<dbReference type="SMR" id="Q8G139"/>
<dbReference type="GeneID" id="55590590"/>
<dbReference type="KEGG" id="bms:BR0885"/>
<dbReference type="KEGG" id="bsi:BS1330_I0881"/>
<dbReference type="PATRIC" id="fig|204722.21.peg.2560"/>
<dbReference type="HOGENOM" id="CLU_023797_1_1_5"/>
<dbReference type="UniPathway" id="UPA00906">
    <property type="reaction ID" value="UER00895"/>
</dbReference>
<dbReference type="Proteomes" id="UP000007104">
    <property type="component" value="Chromosome I"/>
</dbReference>
<dbReference type="GO" id="GO:0005737">
    <property type="term" value="C:cytoplasm"/>
    <property type="evidence" value="ECO:0007669"/>
    <property type="project" value="UniProtKB-SubCell"/>
</dbReference>
<dbReference type="GO" id="GO:0005524">
    <property type="term" value="F:ATP binding"/>
    <property type="evidence" value="ECO:0007669"/>
    <property type="project" value="UniProtKB-UniRule"/>
</dbReference>
<dbReference type="GO" id="GO:0004828">
    <property type="term" value="F:serine-tRNA ligase activity"/>
    <property type="evidence" value="ECO:0007669"/>
    <property type="project" value="UniProtKB-UniRule"/>
</dbReference>
<dbReference type="GO" id="GO:0016260">
    <property type="term" value="P:selenocysteine biosynthetic process"/>
    <property type="evidence" value="ECO:0007669"/>
    <property type="project" value="UniProtKB-UniRule"/>
</dbReference>
<dbReference type="GO" id="GO:0006434">
    <property type="term" value="P:seryl-tRNA aminoacylation"/>
    <property type="evidence" value="ECO:0007669"/>
    <property type="project" value="UniProtKB-UniRule"/>
</dbReference>
<dbReference type="CDD" id="cd00770">
    <property type="entry name" value="SerRS_core"/>
    <property type="match status" value="1"/>
</dbReference>
<dbReference type="Gene3D" id="3.30.930.10">
    <property type="entry name" value="Bira Bifunctional Protein, Domain 2"/>
    <property type="match status" value="1"/>
</dbReference>
<dbReference type="Gene3D" id="1.10.287.40">
    <property type="entry name" value="Serine-tRNA synthetase, tRNA binding domain"/>
    <property type="match status" value="1"/>
</dbReference>
<dbReference type="HAMAP" id="MF_00176">
    <property type="entry name" value="Ser_tRNA_synth_type1"/>
    <property type="match status" value="1"/>
</dbReference>
<dbReference type="InterPro" id="IPR002314">
    <property type="entry name" value="aa-tRNA-synt_IIb"/>
</dbReference>
<dbReference type="InterPro" id="IPR006195">
    <property type="entry name" value="aa-tRNA-synth_II"/>
</dbReference>
<dbReference type="InterPro" id="IPR045864">
    <property type="entry name" value="aa-tRNA-synth_II/BPL/LPL"/>
</dbReference>
<dbReference type="InterPro" id="IPR002317">
    <property type="entry name" value="Ser-tRNA-ligase_type_1"/>
</dbReference>
<dbReference type="InterPro" id="IPR015866">
    <property type="entry name" value="Ser-tRNA-synth_1_N"/>
</dbReference>
<dbReference type="InterPro" id="IPR042103">
    <property type="entry name" value="SerRS_1_N_sf"/>
</dbReference>
<dbReference type="InterPro" id="IPR033729">
    <property type="entry name" value="SerRS_core"/>
</dbReference>
<dbReference type="InterPro" id="IPR010978">
    <property type="entry name" value="tRNA-bd_arm"/>
</dbReference>
<dbReference type="NCBIfam" id="TIGR00414">
    <property type="entry name" value="serS"/>
    <property type="match status" value="1"/>
</dbReference>
<dbReference type="PANTHER" id="PTHR43697:SF1">
    <property type="entry name" value="SERINE--TRNA LIGASE"/>
    <property type="match status" value="1"/>
</dbReference>
<dbReference type="PANTHER" id="PTHR43697">
    <property type="entry name" value="SERYL-TRNA SYNTHETASE"/>
    <property type="match status" value="1"/>
</dbReference>
<dbReference type="Pfam" id="PF02403">
    <property type="entry name" value="Seryl_tRNA_N"/>
    <property type="match status" value="1"/>
</dbReference>
<dbReference type="Pfam" id="PF00587">
    <property type="entry name" value="tRNA-synt_2b"/>
    <property type="match status" value="1"/>
</dbReference>
<dbReference type="PIRSF" id="PIRSF001529">
    <property type="entry name" value="Ser-tRNA-synth_IIa"/>
    <property type="match status" value="1"/>
</dbReference>
<dbReference type="PRINTS" id="PR00981">
    <property type="entry name" value="TRNASYNTHSER"/>
</dbReference>
<dbReference type="SUPFAM" id="SSF55681">
    <property type="entry name" value="Class II aaRS and biotin synthetases"/>
    <property type="match status" value="1"/>
</dbReference>
<dbReference type="SUPFAM" id="SSF46589">
    <property type="entry name" value="tRNA-binding arm"/>
    <property type="match status" value="1"/>
</dbReference>
<dbReference type="PROSITE" id="PS50862">
    <property type="entry name" value="AA_TRNA_LIGASE_II"/>
    <property type="match status" value="1"/>
</dbReference>
<name>SYS_BRUSU</name>
<organism>
    <name type="scientific">Brucella suis biovar 1 (strain 1330)</name>
    <dbReference type="NCBI Taxonomy" id="204722"/>
    <lineage>
        <taxon>Bacteria</taxon>
        <taxon>Pseudomonadati</taxon>
        <taxon>Pseudomonadota</taxon>
        <taxon>Alphaproteobacteria</taxon>
        <taxon>Hyphomicrobiales</taxon>
        <taxon>Brucellaceae</taxon>
        <taxon>Brucella/Ochrobactrum group</taxon>
        <taxon>Brucella</taxon>
    </lineage>
</organism>
<feature type="chain" id="PRO_0000122017" description="Serine--tRNA ligase">
    <location>
        <begin position="1"/>
        <end position="427"/>
    </location>
</feature>
<feature type="binding site" evidence="1">
    <location>
        <begin position="231"/>
        <end position="233"/>
    </location>
    <ligand>
        <name>L-serine</name>
        <dbReference type="ChEBI" id="CHEBI:33384"/>
    </ligand>
</feature>
<feature type="binding site" evidence="1">
    <location>
        <begin position="262"/>
        <end position="264"/>
    </location>
    <ligand>
        <name>ATP</name>
        <dbReference type="ChEBI" id="CHEBI:30616"/>
    </ligand>
</feature>
<feature type="binding site" evidence="1">
    <location>
        <position position="285"/>
    </location>
    <ligand>
        <name>L-serine</name>
        <dbReference type="ChEBI" id="CHEBI:33384"/>
    </ligand>
</feature>
<feature type="binding site" evidence="1">
    <location>
        <begin position="349"/>
        <end position="352"/>
    </location>
    <ligand>
        <name>ATP</name>
        <dbReference type="ChEBI" id="CHEBI:30616"/>
    </ligand>
</feature>
<feature type="binding site" evidence="1">
    <location>
        <position position="385"/>
    </location>
    <ligand>
        <name>L-serine</name>
        <dbReference type="ChEBI" id="CHEBI:33384"/>
    </ligand>
</feature>
<accession>Q8G139</accession>
<accession>G0K9B3</accession>
<proteinExistence type="inferred from homology"/>
<evidence type="ECO:0000255" key="1">
    <source>
        <dbReference type="HAMAP-Rule" id="MF_00176"/>
    </source>
</evidence>
<protein>
    <recommendedName>
        <fullName evidence="1">Serine--tRNA ligase</fullName>
        <ecNumber evidence="1">6.1.1.11</ecNumber>
    </recommendedName>
    <alternativeName>
        <fullName evidence="1">Seryl-tRNA synthetase</fullName>
        <shortName evidence="1">SerRS</shortName>
    </alternativeName>
    <alternativeName>
        <fullName evidence="1">Seryl-tRNA(Ser/Sec) synthetase</fullName>
    </alternativeName>
</protein>